<comment type="function">
    <text evidence="1">This enzyme is involved in nucleotide metabolism: it produces dUMP, the immediate precursor of thymidine nucleotides and it decreases the intracellular concentration of dUTP so that uracil cannot be incorporated into DNA.</text>
</comment>
<comment type="catalytic activity">
    <reaction evidence="1">
        <text>dUTP + H2O = dUMP + diphosphate + H(+)</text>
        <dbReference type="Rhea" id="RHEA:10248"/>
        <dbReference type="ChEBI" id="CHEBI:15377"/>
        <dbReference type="ChEBI" id="CHEBI:15378"/>
        <dbReference type="ChEBI" id="CHEBI:33019"/>
        <dbReference type="ChEBI" id="CHEBI:61555"/>
        <dbReference type="ChEBI" id="CHEBI:246422"/>
        <dbReference type="EC" id="3.6.1.23"/>
    </reaction>
</comment>
<comment type="cofactor">
    <cofactor evidence="1">
        <name>Mg(2+)</name>
        <dbReference type="ChEBI" id="CHEBI:18420"/>
    </cofactor>
</comment>
<comment type="pathway">
    <text evidence="1">Pyrimidine metabolism; dUMP biosynthesis; dUMP from dCTP (dUTP route): step 2/2.</text>
</comment>
<comment type="similarity">
    <text evidence="1">Belongs to the dUTPase family.</text>
</comment>
<protein>
    <recommendedName>
        <fullName evidence="1">Deoxyuridine 5'-triphosphate nucleotidohydrolase</fullName>
        <shortName evidence="1">dUTPase</shortName>
        <ecNumber evidence="1">3.6.1.23</ecNumber>
    </recommendedName>
    <alternativeName>
        <fullName evidence="1">dUTP pyrophosphatase</fullName>
    </alternativeName>
</protein>
<evidence type="ECO:0000255" key="1">
    <source>
        <dbReference type="HAMAP-Rule" id="MF_00116"/>
    </source>
</evidence>
<dbReference type="EC" id="3.6.1.23" evidence="1"/>
<dbReference type="EMBL" id="AE017220">
    <property type="protein sequence ID" value="AAX67560.1"/>
    <property type="molecule type" value="Genomic_DNA"/>
</dbReference>
<dbReference type="RefSeq" id="WP_000976078.1">
    <property type="nucleotide sequence ID" value="NC_006905.1"/>
</dbReference>
<dbReference type="SMR" id="Q57IA2"/>
<dbReference type="KEGG" id="sec:SCH_3654"/>
<dbReference type="HOGENOM" id="CLU_068508_1_1_6"/>
<dbReference type="UniPathway" id="UPA00610">
    <property type="reaction ID" value="UER00666"/>
</dbReference>
<dbReference type="Proteomes" id="UP000000538">
    <property type="component" value="Chromosome"/>
</dbReference>
<dbReference type="GO" id="GO:0004170">
    <property type="term" value="F:dUTP diphosphatase activity"/>
    <property type="evidence" value="ECO:0007669"/>
    <property type="project" value="UniProtKB-UniRule"/>
</dbReference>
<dbReference type="GO" id="GO:0000287">
    <property type="term" value="F:magnesium ion binding"/>
    <property type="evidence" value="ECO:0007669"/>
    <property type="project" value="UniProtKB-UniRule"/>
</dbReference>
<dbReference type="GO" id="GO:0006226">
    <property type="term" value="P:dUMP biosynthetic process"/>
    <property type="evidence" value="ECO:0007669"/>
    <property type="project" value="UniProtKB-UniRule"/>
</dbReference>
<dbReference type="GO" id="GO:0046081">
    <property type="term" value="P:dUTP catabolic process"/>
    <property type="evidence" value="ECO:0007669"/>
    <property type="project" value="InterPro"/>
</dbReference>
<dbReference type="CDD" id="cd07557">
    <property type="entry name" value="trimeric_dUTPase"/>
    <property type="match status" value="1"/>
</dbReference>
<dbReference type="FunFam" id="2.70.40.10:FF:000002">
    <property type="entry name" value="dUTP diphosphatase"/>
    <property type="match status" value="1"/>
</dbReference>
<dbReference type="Gene3D" id="2.70.40.10">
    <property type="match status" value="1"/>
</dbReference>
<dbReference type="HAMAP" id="MF_00116">
    <property type="entry name" value="dUTPase_bact"/>
    <property type="match status" value="1"/>
</dbReference>
<dbReference type="InterPro" id="IPR008181">
    <property type="entry name" value="dUTPase"/>
</dbReference>
<dbReference type="InterPro" id="IPR029054">
    <property type="entry name" value="dUTPase-like"/>
</dbReference>
<dbReference type="InterPro" id="IPR036157">
    <property type="entry name" value="dUTPase-like_sf"/>
</dbReference>
<dbReference type="InterPro" id="IPR033704">
    <property type="entry name" value="dUTPase_trimeric"/>
</dbReference>
<dbReference type="NCBIfam" id="TIGR00576">
    <property type="entry name" value="dut"/>
    <property type="match status" value="1"/>
</dbReference>
<dbReference type="NCBIfam" id="NF001862">
    <property type="entry name" value="PRK00601.1"/>
    <property type="match status" value="1"/>
</dbReference>
<dbReference type="PANTHER" id="PTHR11241">
    <property type="entry name" value="DEOXYURIDINE 5'-TRIPHOSPHATE NUCLEOTIDOHYDROLASE"/>
    <property type="match status" value="1"/>
</dbReference>
<dbReference type="PANTHER" id="PTHR11241:SF0">
    <property type="entry name" value="DEOXYURIDINE 5'-TRIPHOSPHATE NUCLEOTIDOHYDROLASE"/>
    <property type="match status" value="1"/>
</dbReference>
<dbReference type="Pfam" id="PF00692">
    <property type="entry name" value="dUTPase"/>
    <property type="match status" value="1"/>
</dbReference>
<dbReference type="SUPFAM" id="SSF51283">
    <property type="entry name" value="dUTPase-like"/>
    <property type="match status" value="1"/>
</dbReference>
<sequence length="152" mass="16168">MMKKIDVKILDPRVGQQFPLPTYATSGSAGLDLRACLDDAVELAPGATTLVPTGLAIHIADPSLAAVMLPRSGLGHKHGIVLGNLVGLIDSDYQGQLMVSIWNRGQDSFTIEPGERIAQMVFVPVVQAEFNLVEAFDATERGEGGFGHSGRK</sequence>
<keyword id="KW-0378">Hydrolase</keyword>
<keyword id="KW-0460">Magnesium</keyword>
<keyword id="KW-0479">Metal-binding</keyword>
<keyword id="KW-0546">Nucleotide metabolism</keyword>
<proteinExistence type="inferred from homology"/>
<gene>
    <name evidence="1" type="primary">dut</name>
    <name type="ordered locus">SCH_3654</name>
</gene>
<organism>
    <name type="scientific">Salmonella choleraesuis (strain SC-B67)</name>
    <dbReference type="NCBI Taxonomy" id="321314"/>
    <lineage>
        <taxon>Bacteria</taxon>
        <taxon>Pseudomonadati</taxon>
        <taxon>Pseudomonadota</taxon>
        <taxon>Gammaproteobacteria</taxon>
        <taxon>Enterobacterales</taxon>
        <taxon>Enterobacteriaceae</taxon>
        <taxon>Salmonella</taxon>
    </lineage>
</organism>
<accession>Q57IA2</accession>
<reference key="1">
    <citation type="journal article" date="2005" name="Nucleic Acids Res.">
        <title>The genome sequence of Salmonella enterica serovar Choleraesuis, a highly invasive and resistant zoonotic pathogen.</title>
        <authorList>
            <person name="Chiu C.-H."/>
            <person name="Tang P."/>
            <person name="Chu C."/>
            <person name="Hu S."/>
            <person name="Bao Q."/>
            <person name="Yu J."/>
            <person name="Chou Y.-Y."/>
            <person name="Wang H.-S."/>
            <person name="Lee Y.-S."/>
        </authorList>
    </citation>
    <scope>NUCLEOTIDE SEQUENCE [LARGE SCALE GENOMIC DNA]</scope>
    <source>
        <strain>SC-B67</strain>
    </source>
</reference>
<name>DUT_SALCH</name>
<feature type="chain" id="PRO_0000231426" description="Deoxyuridine 5'-triphosphate nucleotidohydrolase">
    <location>
        <begin position="1"/>
        <end position="152"/>
    </location>
</feature>
<feature type="binding site" evidence="1">
    <location>
        <begin position="71"/>
        <end position="73"/>
    </location>
    <ligand>
        <name>substrate</name>
    </ligand>
</feature>
<feature type="binding site" evidence="1">
    <location>
        <position position="84"/>
    </location>
    <ligand>
        <name>substrate</name>
    </ligand>
</feature>
<feature type="binding site" evidence="1">
    <location>
        <begin position="88"/>
        <end position="90"/>
    </location>
    <ligand>
        <name>substrate</name>
    </ligand>
</feature>
<feature type="binding site" evidence="1">
    <location>
        <position position="98"/>
    </location>
    <ligand>
        <name>substrate</name>
    </ligand>
</feature>